<reference key="1">
    <citation type="journal article" date="2008" name="Chem. Biol. Interact.">
        <title>Extending the Bacillus cereus group genomics to putative food-borne pathogens of different toxicity.</title>
        <authorList>
            <person name="Lapidus A."/>
            <person name="Goltsman E."/>
            <person name="Auger S."/>
            <person name="Galleron N."/>
            <person name="Segurens B."/>
            <person name="Dossat C."/>
            <person name="Land M.L."/>
            <person name="Broussolle V."/>
            <person name="Brillard J."/>
            <person name="Guinebretiere M.-H."/>
            <person name="Sanchis V."/>
            <person name="Nguen-the C."/>
            <person name="Lereclus D."/>
            <person name="Richardson P."/>
            <person name="Wincker P."/>
            <person name="Weissenbach J."/>
            <person name="Ehrlich S.D."/>
            <person name="Sorokin A."/>
        </authorList>
    </citation>
    <scope>NUCLEOTIDE SEQUENCE [LARGE SCALE GENOMIC DNA]</scope>
    <source>
        <strain>KBAB4</strain>
    </source>
</reference>
<comment type="function">
    <text evidence="1">One of two assembly initiator proteins, it binds directly to the 5'-end of the 23S rRNA, where it nucleates assembly of the 50S subunit.</text>
</comment>
<comment type="function">
    <text evidence="1">One of the proteins that surrounds the polypeptide exit tunnel on the outside of the subunit.</text>
</comment>
<comment type="subunit">
    <text evidence="1">Part of the 50S ribosomal subunit.</text>
</comment>
<comment type="similarity">
    <text evidence="1">Belongs to the universal ribosomal protein uL24 family.</text>
</comment>
<sequence>MHVKKGDKVQVITGKDKGKQGVILVAFPKQNRVIVEGVNIVKKHSKPSQLNPQGGIITKEAPIHVSNVMVLDPKTGEPTRVGFKVEDGKKVRIAKKSGELLDK</sequence>
<dbReference type="EMBL" id="CP000903">
    <property type="protein sequence ID" value="ABY41385.1"/>
    <property type="molecule type" value="Genomic_DNA"/>
</dbReference>
<dbReference type="RefSeq" id="WP_000558201.1">
    <property type="nucleotide sequence ID" value="NZ_CAKMRX030000129.1"/>
</dbReference>
<dbReference type="SMR" id="A9VP88"/>
<dbReference type="GeneID" id="92798764"/>
<dbReference type="KEGG" id="bwe:BcerKBAB4_0116"/>
<dbReference type="eggNOG" id="COG0198">
    <property type="taxonomic scope" value="Bacteria"/>
</dbReference>
<dbReference type="HOGENOM" id="CLU_093315_2_0_9"/>
<dbReference type="Proteomes" id="UP000002154">
    <property type="component" value="Chromosome"/>
</dbReference>
<dbReference type="GO" id="GO:1990904">
    <property type="term" value="C:ribonucleoprotein complex"/>
    <property type="evidence" value="ECO:0007669"/>
    <property type="project" value="UniProtKB-KW"/>
</dbReference>
<dbReference type="GO" id="GO:0005840">
    <property type="term" value="C:ribosome"/>
    <property type="evidence" value="ECO:0007669"/>
    <property type="project" value="UniProtKB-KW"/>
</dbReference>
<dbReference type="GO" id="GO:0019843">
    <property type="term" value="F:rRNA binding"/>
    <property type="evidence" value="ECO:0007669"/>
    <property type="project" value="UniProtKB-UniRule"/>
</dbReference>
<dbReference type="GO" id="GO:0003735">
    <property type="term" value="F:structural constituent of ribosome"/>
    <property type="evidence" value="ECO:0007669"/>
    <property type="project" value="InterPro"/>
</dbReference>
<dbReference type="GO" id="GO:0006412">
    <property type="term" value="P:translation"/>
    <property type="evidence" value="ECO:0007669"/>
    <property type="project" value="UniProtKB-UniRule"/>
</dbReference>
<dbReference type="CDD" id="cd06089">
    <property type="entry name" value="KOW_RPL26"/>
    <property type="match status" value="1"/>
</dbReference>
<dbReference type="FunFam" id="2.30.30.30:FF:000004">
    <property type="entry name" value="50S ribosomal protein L24"/>
    <property type="match status" value="1"/>
</dbReference>
<dbReference type="Gene3D" id="2.30.30.30">
    <property type="match status" value="1"/>
</dbReference>
<dbReference type="HAMAP" id="MF_01326_B">
    <property type="entry name" value="Ribosomal_uL24_B"/>
    <property type="match status" value="1"/>
</dbReference>
<dbReference type="InterPro" id="IPR005824">
    <property type="entry name" value="KOW"/>
</dbReference>
<dbReference type="InterPro" id="IPR014722">
    <property type="entry name" value="Rib_uL2_dom2"/>
</dbReference>
<dbReference type="InterPro" id="IPR003256">
    <property type="entry name" value="Ribosomal_uL24"/>
</dbReference>
<dbReference type="InterPro" id="IPR005825">
    <property type="entry name" value="Ribosomal_uL24_CS"/>
</dbReference>
<dbReference type="InterPro" id="IPR041988">
    <property type="entry name" value="Ribosomal_uL24_KOW"/>
</dbReference>
<dbReference type="InterPro" id="IPR008991">
    <property type="entry name" value="Translation_prot_SH3-like_sf"/>
</dbReference>
<dbReference type="NCBIfam" id="TIGR01079">
    <property type="entry name" value="rplX_bact"/>
    <property type="match status" value="1"/>
</dbReference>
<dbReference type="PANTHER" id="PTHR12903">
    <property type="entry name" value="MITOCHONDRIAL RIBOSOMAL PROTEIN L24"/>
    <property type="match status" value="1"/>
</dbReference>
<dbReference type="Pfam" id="PF00467">
    <property type="entry name" value="KOW"/>
    <property type="match status" value="1"/>
</dbReference>
<dbReference type="Pfam" id="PF17136">
    <property type="entry name" value="ribosomal_L24"/>
    <property type="match status" value="1"/>
</dbReference>
<dbReference type="SMART" id="SM00739">
    <property type="entry name" value="KOW"/>
    <property type="match status" value="1"/>
</dbReference>
<dbReference type="SUPFAM" id="SSF50104">
    <property type="entry name" value="Translation proteins SH3-like domain"/>
    <property type="match status" value="1"/>
</dbReference>
<dbReference type="PROSITE" id="PS01108">
    <property type="entry name" value="RIBOSOMAL_L24"/>
    <property type="match status" value="1"/>
</dbReference>
<accession>A9VP88</accession>
<keyword id="KW-0687">Ribonucleoprotein</keyword>
<keyword id="KW-0689">Ribosomal protein</keyword>
<keyword id="KW-0694">RNA-binding</keyword>
<keyword id="KW-0699">rRNA-binding</keyword>
<proteinExistence type="inferred from homology"/>
<organism>
    <name type="scientific">Bacillus mycoides (strain KBAB4)</name>
    <name type="common">Bacillus weihenstephanensis</name>
    <dbReference type="NCBI Taxonomy" id="315730"/>
    <lineage>
        <taxon>Bacteria</taxon>
        <taxon>Bacillati</taxon>
        <taxon>Bacillota</taxon>
        <taxon>Bacilli</taxon>
        <taxon>Bacillales</taxon>
        <taxon>Bacillaceae</taxon>
        <taxon>Bacillus</taxon>
        <taxon>Bacillus cereus group</taxon>
    </lineage>
</organism>
<evidence type="ECO:0000255" key="1">
    <source>
        <dbReference type="HAMAP-Rule" id="MF_01326"/>
    </source>
</evidence>
<evidence type="ECO:0000305" key="2"/>
<protein>
    <recommendedName>
        <fullName evidence="1">Large ribosomal subunit protein uL24</fullName>
    </recommendedName>
    <alternativeName>
        <fullName evidence="2">50S ribosomal protein L24</fullName>
    </alternativeName>
</protein>
<name>RL24_BACMK</name>
<gene>
    <name evidence="1" type="primary">rplX</name>
    <name type="ordered locus">BcerKBAB4_0116</name>
</gene>
<feature type="chain" id="PRO_1000141964" description="Large ribosomal subunit protein uL24">
    <location>
        <begin position="1"/>
        <end position="103"/>
    </location>
</feature>